<dbReference type="EMBL" id="AY958085">
    <property type="protein sequence ID" value="AAX45735.1"/>
    <property type="molecule type" value="Genomic_DNA"/>
</dbReference>
<dbReference type="RefSeq" id="YP_636445.1">
    <property type="nucleotide sequence ID" value="NC_008116.1"/>
</dbReference>
<dbReference type="SMR" id="Q32RT1"/>
<dbReference type="GeneID" id="4108598"/>
<dbReference type="GO" id="GO:0009535">
    <property type="term" value="C:chloroplast thylakoid membrane"/>
    <property type="evidence" value="ECO:0007669"/>
    <property type="project" value="UniProtKB-SubCell"/>
</dbReference>
<dbReference type="GO" id="GO:0009539">
    <property type="term" value="C:photosystem II reaction center"/>
    <property type="evidence" value="ECO:0007669"/>
    <property type="project" value="InterPro"/>
</dbReference>
<dbReference type="GO" id="GO:0015979">
    <property type="term" value="P:photosynthesis"/>
    <property type="evidence" value="ECO:0007669"/>
    <property type="project" value="UniProtKB-UniRule"/>
</dbReference>
<dbReference type="GO" id="GO:0042549">
    <property type="term" value="P:photosystem II stabilization"/>
    <property type="evidence" value="ECO:0007669"/>
    <property type="project" value="InterPro"/>
</dbReference>
<dbReference type="Gene3D" id="1.10.287.740">
    <property type="entry name" value="Photosystem II PsbZ, reaction centre"/>
    <property type="match status" value="1"/>
</dbReference>
<dbReference type="HAMAP" id="MF_00644">
    <property type="entry name" value="PSII_PsbZ"/>
    <property type="match status" value="1"/>
</dbReference>
<dbReference type="InterPro" id="IPR002644">
    <property type="entry name" value="PSII_PsbZ"/>
</dbReference>
<dbReference type="InterPro" id="IPR036512">
    <property type="entry name" value="PSII_PsbZ_sf"/>
</dbReference>
<dbReference type="NCBIfam" id="TIGR03043">
    <property type="entry name" value="PS_II_psbZ"/>
    <property type="match status" value="1"/>
</dbReference>
<dbReference type="PANTHER" id="PTHR34971">
    <property type="entry name" value="PHOTOSYSTEM II REACTION CENTER PROTEIN Z"/>
    <property type="match status" value="1"/>
</dbReference>
<dbReference type="PANTHER" id="PTHR34971:SF2">
    <property type="entry name" value="PHOTOSYSTEM II REACTION CENTER PROTEIN Z"/>
    <property type="match status" value="1"/>
</dbReference>
<dbReference type="Pfam" id="PF01737">
    <property type="entry name" value="Ycf9"/>
    <property type="match status" value="1"/>
</dbReference>
<dbReference type="SUPFAM" id="SSF161055">
    <property type="entry name" value="PsbZ-like"/>
    <property type="match status" value="1"/>
</dbReference>
<keyword id="KW-0150">Chloroplast</keyword>
<keyword id="KW-0472">Membrane</keyword>
<keyword id="KW-0602">Photosynthesis</keyword>
<keyword id="KW-0604">Photosystem II</keyword>
<keyword id="KW-0934">Plastid</keyword>
<keyword id="KW-0674">Reaction center</keyword>
<keyword id="KW-0793">Thylakoid</keyword>
<keyword id="KW-0812">Transmembrane</keyword>
<keyword id="KW-1133">Transmembrane helix</keyword>
<protein>
    <recommendedName>
        <fullName evidence="1">Photosystem II reaction center protein Z</fullName>
        <shortName evidence="1">PSII-Z</shortName>
    </recommendedName>
</protein>
<evidence type="ECO:0000255" key="1">
    <source>
        <dbReference type="HAMAP-Rule" id="MF_00644"/>
    </source>
</evidence>
<sequence>MTTLFQLSVFALIILSFLLVIGVPVVLASPDGWSTRKNTVFSGASLWIGLVFLVGILNSFIS</sequence>
<name>PSBZ_STAPU</name>
<comment type="function">
    <text evidence="1">May control the interaction of photosystem II (PSII) cores with the light-harvesting antenna, regulates electron flow through the 2 photosystem reaction centers. PSII is a light-driven water plastoquinone oxidoreductase, using light energy to abstract electrons from H(2)O, generating a proton gradient subsequently used for ATP formation.</text>
</comment>
<comment type="subunit">
    <text evidence="1">PSII is composed of 1 copy each of membrane proteins PsbA, PsbB, PsbC, PsbD, PsbE, PsbF, PsbH, PsbI, PsbJ, PsbK, PsbL, PsbM, PsbT, PsbY, PsbZ, Psb30/Ycf12, at least 3 peripheral proteins of the oxygen-evolving complex and a large number of cofactors. It forms dimeric complexes.</text>
</comment>
<comment type="subcellular location">
    <subcellularLocation>
        <location evidence="1">Plastid</location>
        <location evidence="1">Chloroplast thylakoid membrane</location>
        <topology evidence="1">Multi-pass membrane protein</topology>
    </subcellularLocation>
</comment>
<comment type="similarity">
    <text evidence="1">Belongs to the PsbZ family.</text>
</comment>
<accession>Q32RT1</accession>
<gene>
    <name evidence="1" type="primary">psbZ</name>
</gene>
<feature type="chain" id="PRO_0000277239" description="Photosystem II reaction center protein Z">
    <location>
        <begin position="1"/>
        <end position="62"/>
    </location>
</feature>
<feature type="transmembrane region" description="Helical" evidence="1">
    <location>
        <begin position="8"/>
        <end position="28"/>
    </location>
</feature>
<feature type="transmembrane region" description="Helical" evidence="1">
    <location>
        <begin position="41"/>
        <end position="61"/>
    </location>
</feature>
<geneLocation type="chloroplast"/>
<proteinExistence type="inferred from homology"/>
<organism>
    <name type="scientific">Staurastrum punctulatum</name>
    <name type="common">Green alga</name>
    <name type="synonym">Cosmoastrum punctulatum</name>
    <dbReference type="NCBI Taxonomy" id="102822"/>
    <lineage>
        <taxon>Eukaryota</taxon>
        <taxon>Viridiplantae</taxon>
        <taxon>Streptophyta</taxon>
        <taxon>Zygnematophyceae</taxon>
        <taxon>Zygnematophycidae</taxon>
        <taxon>Desmidiales</taxon>
        <taxon>Desmidiaceae</taxon>
        <taxon>Staurastrum</taxon>
    </lineage>
</organism>
<reference key="1">
    <citation type="journal article" date="2005" name="BMC Biol.">
        <title>The complete chloroplast DNA sequences of the charophycean green algae Staurastrum and Zygnema reveal that the chloroplast genome underwent extensive changes during the evolution of the Zygnematales.</title>
        <authorList>
            <person name="Turmel M."/>
            <person name="Otis C."/>
            <person name="Lemieux C."/>
        </authorList>
    </citation>
    <scope>NUCLEOTIDE SEQUENCE [LARGE SCALE GENOMIC DNA]</scope>
</reference>